<name>GP168_BPTWO</name>
<keyword id="KW-0002">3D-structure</keyword>
<keyword id="KW-0175">Coiled coil</keyword>
<keyword id="KW-0945">Host-virus interaction</keyword>
<keyword id="KW-1248">Inhibition of host DNA replication by virus</keyword>
<keyword id="KW-1121">Modulation of host cell cycle by virus</keyword>
<keyword id="KW-1185">Reference proteome</keyword>
<organismHost>
    <name type="scientific">Twortvirus twort</name>
    <dbReference type="NCBI Taxonomy" id="55510"/>
</organismHost>
<sequence length="74" mass="8989">MLFFKEKFYNELSYYRGGHKDLESMFELALEYIEKLEEEDEQQVTDYENAMEEELRDAVDVIESQLEIIKDIVR</sequence>
<accession>Q4Z971</accession>
<dbReference type="EMBL" id="AY954970">
    <property type="protein sequence ID" value="AAX92440.1"/>
    <property type="molecule type" value="Genomic_DNA"/>
</dbReference>
<dbReference type="RefSeq" id="YP_238634.1">
    <property type="nucleotide sequence ID" value="NC_007021.1"/>
</dbReference>
<dbReference type="PDB" id="7EVP">
    <property type="method" value="EM"/>
    <property type="resolution" value="3.20 A"/>
    <property type="chains" value="C/D=1-74"/>
</dbReference>
<dbReference type="PDBsum" id="7EVP"/>
<dbReference type="SMR" id="Q4Z971"/>
<dbReference type="GeneID" id="5130347"/>
<dbReference type="KEGG" id="vg:5130347"/>
<dbReference type="Proteomes" id="UP000001466">
    <property type="component" value="Segment"/>
</dbReference>
<dbReference type="GO" id="GO:0044071">
    <property type="term" value="P:symbiont-mediated perturbation of host cell cycle progression"/>
    <property type="evidence" value="ECO:0007669"/>
    <property type="project" value="UniProtKB-KW"/>
</dbReference>
<dbReference type="GO" id="GO:0098673">
    <property type="term" value="P:symbiont-mediated suppression of host DNA replication"/>
    <property type="evidence" value="ECO:0007669"/>
    <property type="project" value="UniProtKB-KW"/>
</dbReference>
<organism>
    <name type="scientific">Staphylococcus phage Twort (strain DSM 17442 / HER 48)</name>
    <name type="common">Bacteriophage Twort</name>
    <dbReference type="NCBI Taxonomy" id="2908167"/>
    <lineage>
        <taxon>Viruses</taxon>
        <taxon>Duplodnaviria</taxon>
        <taxon>Heunggongvirae</taxon>
        <taxon>Uroviricota</taxon>
        <taxon>Caudoviricetes</taxon>
        <taxon>Herelleviridae</taxon>
        <taxon>Twortvirinae</taxon>
        <taxon>Twortvirus</taxon>
        <taxon>Twortvirus twort</taxon>
    </lineage>
</organism>
<comment type="function">
    <text evidence="2">Targets the host DNA sliding clamp and inhibits host DNA replication.</text>
</comment>
<reference key="1">
    <citation type="journal article" date="2005" name="Proc. Natl. Acad. Sci. U.S.A.">
        <title>The complete genomes and proteomes of 27 Staphylococcus aureus bacteriophages.</title>
        <authorList>
            <person name="Kwan T."/>
            <person name="Liu J."/>
            <person name="DuBow M."/>
            <person name="Gros P."/>
            <person name="Pelletier J."/>
        </authorList>
    </citation>
    <scope>NUCLEOTIDE SEQUENCE [LARGE SCALE GENOMIC DNA]</scope>
</reference>
<reference key="2">
    <citation type="journal article" date="2006" name="Mol. Microbiol.">
        <title>Competition of bacteriophage polypeptides with native replicase proteins for binding to the DNA sliding clamp reveals a novel mechanism for DNA replication arrest in Staphylococcus aureus.</title>
        <authorList>
            <person name="Belley A."/>
            <person name="Callejo M."/>
            <person name="Arhin F."/>
            <person name="Dehbi M."/>
            <person name="Fadhil I."/>
            <person name="Liu J."/>
            <person name="McKay G."/>
            <person name="Srikumar R."/>
            <person name="Bauda P."/>
            <person name="Bergeron D."/>
            <person name="Ha N."/>
            <person name="Dubow M."/>
            <person name="Gros P."/>
            <person name="Pelletier J."/>
            <person name="Moeck G."/>
        </authorList>
    </citation>
    <scope>FUNCTION</scope>
</reference>
<evidence type="ECO:0000255" key="1"/>
<evidence type="ECO:0000269" key="2">
    <source>
    </source>
</evidence>
<evidence type="ECO:0000305" key="3"/>
<evidence type="ECO:0007829" key="4">
    <source>
        <dbReference type="PDB" id="7EVP"/>
    </source>
</evidence>
<proteinExistence type="evidence at protein level"/>
<feature type="chain" id="PRO_0000433210" description="Gene product 168">
    <location>
        <begin position="1"/>
        <end position="74"/>
    </location>
</feature>
<feature type="coiled-coil region" evidence="1">
    <location>
        <begin position="19"/>
        <end position="73"/>
    </location>
</feature>
<feature type="helix" evidence="4">
    <location>
        <begin position="13"/>
        <end position="24"/>
    </location>
</feature>
<feature type="turn" evidence="4">
    <location>
        <begin position="25"/>
        <end position="28"/>
    </location>
</feature>
<feature type="strand" evidence="4">
    <location>
        <begin position="29"/>
        <end position="31"/>
    </location>
</feature>
<feature type="helix" evidence="4">
    <location>
        <begin position="33"/>
        <end position="53"/>
    </location>
</feature>
<protein>
    <recommendedName>
        <fullName evidence="3">Gene product 168</fullName>
        <shortName>gp168</shortName>
    </recommendedName>
</protein>